<evidence type="ECO:0000255" key="1">
    <source>
        <dbReference type="HAMAP-Rule" id="MF_01366"/>
    </source>
</evidence>
<evidence type="ECO:0000305" key="2"/>
<dbReference type="EMBL" id="AE008922">
    <property type="protein sequence ID" value="AAM39794.1"/>
    <property type="molecule type" value="Genomic_DNA"/>
</dbReference>
<dbReference type="RefSeq" id="NP_635870.1">
    <property type="nucleotide sequence ID" value="NC_003902.1"/>
</dbReference>
<dbReference type="RefSeq" id="WP_003483082.1">
    <property type="nucleotide sequence ID" value="NC_003902.1"/>
</dbReference>
<dbReference type="SMR" id="Q7CLV7"/>
<dbReference type="STRING" id="190485.XCC0476"/>
<dbReference type="EnsemblBacteria" id="AAM39794">
    <property type="protein sequence ID" value="AAM39794"/>
    <property type="gene ID" value="XCC0476"/>
</dbReference>
<dbReference type="GeneID" id="97508876"/>
<dbReference type="KEGG" id="xcc:XCC0476"/>
<dbReference type="PATRIC" id="fig|190485.4.peg.523"/>
<dbReference type="eggNOG" id="COG0102">
    <property type="taxonomic scope" value="Bacteria"/>
</dbReference>
<dbReference type="HOGENOM" id="CLU_082184_2_2_6"/>
<dbReference type="OrthoDB" id="9801330at2"/>
<dbReference type="PRO" id="PR:Q7CLV7"/>
<dbReference type="Proteomes" id="UP000001010">
    <property type="component" value="Chromosome"/>
</dbReference>
<dbReference type="GO" id="GO:0022625">
    <property type="term" value="C:cytosolic large ribosomal subunit"/>
    <property type="evidence" value="ECO:0000318"/>
    <property type="project" value="GO_Central"/>
</dbReference>
<dbReference type="GO" id="GO:0005840">
    <property type="term" value="C:ribosome"/>
    <property type="evidence" value="ECO:0000318"/>
    <property type="project" value="GO_Central"/>
</dbReference>
<dbReference type="GO" id="GO:0003729">
    <property type="term" value="F:mRNA binding"/>
    <property type="evidence" value="ECO:0000318"/>
    <property type="project" value="GO_Central"/>
</dbReference>
<dbReference type="GO" id="GO:0003735">
    <property type="term" value="F:structural constituent of ribosome"/>
    <property type="evidence" value="ECO:0000318"/>
    <property type="project" value="GO_Central"/>
</dbReference>
<dbReference type="GO" id="GO:0017148">
    <property type="term" value="P:negative regulation of translation"/>
    <property type="evidence" value="ECO:0000318"/>
    <property type="project" value="GO_Central"/>
</dbReference>
<dbReference type="GO" id="GO:0006412">
    <property type="term" value="P:translation"/>
    <property type="evidence" value="ECO:0007669"/>
    <property type="project" value="UniProtKB-UniRule"/>
</dbReference>
<dbReference type="CDD" id="cd00392">
    <property type="entry name" value="Ribosomal_L13"/>
    <property type="match status" value="1"/>
</dbReference>
<dbReference type="FunFam" id="3.90.1180.10:FF:000001">
    <property type="entry name" value="50S ribosomal protein L13"/>
    <property type="match status" value="1"/>
</dbReference>
<dbReference type="Gene3D" id="3.90.1180.10">
    <property type="entry name" value="Ribosomal protein L13"/>
    <property type="match status" value="1"/>
</dbReference>
<dbReference type="HAMAP" id="MF_01366">
    <property type="entry name" value="Ribosomal_uL13"/>
    <property type="match status" value="1"/>
</dbReference>
<dbReference type="InterPro" id="IPR005822">
    <property type="entry name" value="Ribosomal_uL13"/>
</dbReference>
<dbReference type="InterPro" id="IPR005823">
    <property type="entry name" value="Ribosomal_uL13_bac-type"/>
</dbReference>
<dbReference type="InterPro" id="IPR023563">
    <property type="entry name" value="Ribosomal_uL13_CS"/>
</dbReference>
<dbReference type="InterPro" id="IPR036899">
    <property type="entry name" value="Ribosomal_uL13_sf"/>
</dbReference>
<dbReference type="NCBIfam" id="TIGR01066">
    <property type="entry name" value="rplM_bact"/>
    <property type="match status" value="1"/>
</dbReference>
<dbReference type="PANTHER" id="PTHR11545:SF2">
    <property type="entry name" value="LARGE RIBOSOMAL SUBUNIT PROTEIN UL13M"/>
    <property type="match status" value="1"/>
</dbReference>
<dbReference type="PANTHER" id="PTHR11545">
    <property type="entry name" value="RIBOSOMAL PROTEIN L13"/>
    <property type="match status" value="1"/>
</dbReference>
<dbReference type="Pfam" id="PF00572">
    <property type="entry name" value="Ribosomal_L13"/>
    <property type="match status" value="1"/>
</dbReference>
<dbReference type="PIRSF" id="PIRSF002181">
    <property type="entry name" value="Ribosomal_L13"/>
    <property type="match status" value="1"/>
</dbReference>
<dbReference type="SUPFAM" id="SSF52161">
    <property type="entry name" value="Ribosomal protein L13"/>
    <property type="match status" value="1"/>
</dbReference>
<dbReference type="PROSITE" id="PS00783">
    <property type="entry name" value="RIBOSOMAL_L13"/>
    <property type="match status" value="1"/>
</dbReference>
<keyword id="KW-1185">Reference proteome</keyword>
<keyword id="KW-0687">Ribonucleoprotein</keyword>
<keyword id="KW-0689">Ribosomal protein</keyword>
<sequence>MTTFTAKSETVQRDWYLVDAAGKTLGRLSTELARRLRGKHKPVYTPHVDTGDYLVVINAEKIVVTGNKLKDKKYHRFTGYIGNLKTESLEQALQRHPERVIEIAVKGMLPKGPLGRTMYRKLKVYSGAEHPHAAQQPQVLDI</sequence>
<comment type="function">
    <text evidence="1">This protein is one of the early assembly proteins of the 50S ribosomal subunit, although it is not seen to bind rRNA by itself. It is important during the early stages of 50S assembly.</text>
</comment>
<comment type="subunit">
    <text evidence="1">Part of the 50S ribosomal subunit.</text>
</comment>
<comment type="similarity">
    <text evidence="1">Belongs to the universal ribosomal protein uL13 family.</text>
</comment>
<feature type="chain" id="PRO_0000261827" description="Large ribosomal subunit protein uL13">
    <location>
        <begin position="1"/>
        <end position="142"/>
    </location>
</feature>
<name>RL13_XANCP</name>
<protein>
    <recommendedName>
        <fullName evidence="1">Large ribosomal subunit protein uL13</fullName>
    </recommendedName>
    <alternativeName>
        <fullName evidence="2">50S ribosomal protein L13</fullName>
    </alternativeName>
</protein>
<accession>Q7CLV7</accession>
<proteinExistence type="inferred from homology"/>
<reference key="1">
    <citation type="journal article" date="2002" name="Nature">
        <title>Comparison of the genomes of two Xanthomonas pathogens with differing host specificities.</title>
        <authorList>
            <person name="da Silva A.C.R."/>
            <person name="Ferro J.A."/>
            <person name="Reinach F.C."/>
            <person name="Farah C.S."/>
            <person name="Furlan L.R."/>
            <person name="Quaggio R.B."/>
            <person name="Monteiro-Vitorello C.B."/>
            <person name="Van Sluys M.A."/>
            <person name="Almeida N.F. Jr."/>
            <person name="Alves L.M.C."/>
            <person name="do Amaral A.M."/>
            <person name="Bertolini M.C."/>
            <person name="Camargo L.E.A."/>
            <person name="Camarotte G."/>
            <person name="Cannavan F."/>
            <person name="Cardozo J."/>
            <person name="Chambergo F."/>
            <person name="Ciapina L.P."/>
            <person name="Cicarelli R.M.B."/>
            <person name="Coutinho L.L."/>
            <person name="Cursino-Santos J.R."/>
            <person name="El-Dorry H."/>
            <person name="Faria J.B."/>
            <person name="Ferreira A.J.S."/>
            <person name="Ferreira R.C.C."/>
            <person name="Ferro M.I.T."/>
            <person name="Formighieri E.F."/>
            <person name="Franco M.C."/>
            <person name="Greggio C.C."/>
            <person name="Gruber A."/>
            <person name="Katsuyama A.M."/>
            <person name="Kishi L.T."/>
            <person name="Leite R.P."/>
            <person name="Lemos E.G.M."/>
            <person name="Lemos M.V.F."/>
            <person name="Locali E.C."/>
            <person name="Machado M.A."/>
            <person name="Madeira A.M.B.N."/>
            <person name="Martinez-Rossi N.M."/>
            <person name="Martins E.C."/>
            <person name="Meidanis J."/>
            <person name="Menck C.F.M."/>
            <person name="Miyaki C.Y."/>
            <person name="Moon D.H."/>
            <person name="Moreira L.M."/>
            <person name="Novo M.T.M."/>
            <person name="Okura V.K."/>
            <person name="Oliveira M.C."/>
            <person name="Oliveira V.R."/>
            <person name="Pereira H.A."/>
            <person name="Rossi A."/>
            <person name="Sena J.A.D."/>
            <person name="Silva C."/>
            <person name="de Souza R.F."/>
            <person name="Spinola L.A.F."/>
            <person name="Takita M.A."/>
            <person name="Tamura R.E."/>
            <person name="Teixeira E.C."/>
            <person name="Tezza R.I.D."/>
            <person name="Trindade dos Santos M."/>
            <person name="Truffi D."/>
            <person name="Tsai S.M."/>
            <person name="White F.F."/>
            <person name="Setubal J.C."/>
            <person name="Kitajima J.P."/>
        </authorList>
    </citation>
    <scope>NUCLEOTIDE SEQUENCE [LARGE SCALE GENOMIC DNA]</scope>
    <source>
        <strain>ATCC 33913 / DSM 3586 / NCPPB 528 / LMG 568 / P 25</strain>
    </source>
</reference>
<gene>
    <name evidence="1" type="primary">rplM</name>
    <name type="ordered locus">XCC0476</name>
</gene>
<organism>
    <name type="scientific">Xanthomonas campestris pv. campestris (strain ATCC 33913 / DSM 3586 / NCPPB 528 / LMG 568 / P 25)</name>
    <dbReference type="NCBI Taxonomy" id="190485"/>
    <lineage>
        <taxon>Bacteria</taxon>
        <taxon>Pseudomonadati</taxon>
        <taxon>Pseudomonadota</taxon>
        <taxon>Gammaproteobacteria</taxon>
        <taxon>Lysobacterales</taxon>
        <taxon>Lysobacteraceae</taxon>
        <taxon>Xanthomonas</taxon>
    </lineage>
</organism>